<accession>B2X1U6</accession>
<evidence type="ECO:0000255" key="1">
    <source>
        <dbReference type="HAMAP-Rule" id="MF_01398"/>
    </source>
</evidence>
<keyword id="KW-0066">ATP synthesis</keyword>
<keyword id="KW-0138">CF(0)</keyword>
<keyword id="KW-0150">Chloroplast</keyword>
<keyword id="KW-0375">Hydrogen ion transport</keyword>
<keyword id="KW-0406">Ion transport</keyword>
<keyword id="KW-0472">Membrane</keyword>
<keyword id="KW-0934">Plastid</keyword>
<keyword id="KW-0793">Thylakoid</keyword>
<keyword id="KW-0812">Transmembrane</keyword>
<keyword id="KW-1133">Transmembrane helix</keyword>
<keyword id="KW-0813">Transport</keyword>
<feature type="chain" id="PRO_0000368958" description="ATP synthase subunit b, chloroplastic">
    <location>
        <begin position="1"/>
        <end position="177"/>
    </location>
</feature>
<feature type="transmembrane region" description="Helical" evidence="1">
    <location>
        <begin position="22"/>
        <end position="42"/>
    </location>
</feature>
<geneLocation type="chloroplast"/>
<sequence>MNLLTIFNILPLGEGFGFNDNILETNIINLAAVVGIVVFFVGKNFSILLENRQQTILNNLREANQRASEALERYNQAKKQLELAEKKAKDIRQEGTLKARQEKENCFNQYKLDLVRLEEYKQETLQFYQQKAFQQIYVSIVSRALGEVKQKFNKPLSEQFHATINNFVIARLTEYNP</sequence>
<reference key="1">
    <citation type="journal article" date="2008" name="J. Phycol.">
        <title>Deep division in the Chlorophyceae (Chlorophyta) revealed by chloroplast phylogenomic analyseS.</title>
        <authorList>
            <person name="Turmel M."/>
            <person name="Brouard J.-S."/>
            <person name="Gagnon C."/>
            <person name="Otis C."/>
            <person name="Lemieux C."/>
        </authorList>
        <dbReference type="AGRICOLA" id="IND44059346"/>
    </citation>
    <scope>NUCLEOTIDE SEQUENCE [GENOMIC DNA]</scope>
    <source>
        <strain>SAG 575-1b / CCAP 575/1B / UTEX LB 40</strain>
    </source>
</reference>
<reference key="2">
    <citation type="journal article" date="2008" name="BMC Genomics">
        <title>Chloroplast DNA sequence of the green alga Oedogonium cardiacum (Chlorophyceae): unique genome architecture, derived characters shared with the Chaetophorales and novel genes acquired through horizontal transfer.</title>
        <authorList>
            <person name="Brouard J.-S."/>
            <person name="Otis C."/>
            <person name="Lemieux C."/>
            <person name="Turmel M."/>
        </authorList>
    </citation>
    <scope>NUCLEOTIDE SEQUENCE [LARGE SCALE GENOMIC DNA]</scope>
    <source>
        <strain>SAG 575-1b / CCAP 575/1B / UTEX LB 40</strain>
    </source>
</reference>
<gene>
    <name evidence="1" type="primary">atpF</name>
</gene>
<protein>
    <recommendedName>
        <fullName evidence="1">ATP synthase subunit b, chloroplastic</fullName>
    </recommendedName>
    <alternativeName>
        <fullName evidence="1">ATP synthase F(0) sector subunit b</fullName>
    </alternativeName>
    <alternativeName>
        <fullName evidence="1">ATPase subunit I</fullName>
    </alternativeName>
</protein>
<organism>
    <name type="scientific">Oedogonium cardiacum</name>
    <name type="common">Filamentous green alga</name>
    <dbReference type="NCBI Taxonomy" id="55995"/>
    <lineage>
        <taxon>Eukaryota</taxon>
        <taxon>Viridiplantae</taxon>
        <taxon>Chlorophyta</taxon>
        <taxon>core chlorophytes</taxon>
        <taxon>Chlorophyceae</taxon>
        <taxon>OCC clade</taxon>
        <taxon>Oedogoniales</taxon>
        <taxon>Oedogoniaceae</taxon>
        <taxon>Oedogonium</taxon>
    </lineage>
</organism>
<proteinExistence type="inferred from homology"/>
<dbReference type="EMBL" id="EF587321">
    <property type="protein sequence ID" value="ABU88159.1"/>
    <property type="molecule type" value="Genomic_DNA"/>
</dbReference>
<dbReference type="EMBL" id="EU677193">
    <property type="protein sequence ID" value="ACC97208.1"/>
    <property type="molecule type" value="Genomic_DNA"/>
</dbReference>
<dbReference type="RefSeq" id="YP_002000387.1">
    <property type="nucleotide sequence ID" value="NC_011031.1"/>
</dbReference>
<dbReference type="SMR" id="B2X1U6"/>
<dbReference type="GeneID" id="6440128"/>
<dbReference type="GO" id="GO:0009535">
    <property type="term" value="C:chloroplast thylakoid membrane"/>
    <property type="evidence" value="ECO:0007669"/>
    <property type="project" value="UniProtKB-SubCell"/>
</dbReference>
<dbReference type="GO" id="GO:0045259">
    <property type="term" value="C:proton-transporting ATP synthase complex"/>
    <property type="evidence" value="ECO:0007669"/>
    <property type="project" value="UniProtKB-KW"/>
</dbReference>
<dbReference type="GO" id="GO:0046933">
    <property type="term" value="F:proton-transporting ATP synthase activity, rotational mechanism"/>
    <property type="evidence" value="ECO:0007669"/>
    <property type="project" value="UniProtKB-UniRule"/>
</dbReference>
<dbReference type="CDD" id="cd06503">
    <property type="entry name" value="ATP-synt_Fo_b"/>
    <property type="match status" value="1"/>
</dbReference>
<dbReference type="HAMAP" id="MF_01398">
    <property type="entry name" value="ATP_synth_b_bprime"/>
    <property type="match status" value="1"/>
</dbReference>
<dbReference type="InterPro" id="IPR002146">
    <property type="entry name" value="ATP_synth_b/b'su_bac/chlpt"/>
</dbReference>
<dbReference type="PANTHER" id="PTHR34264">
    <property type="entry name" value="ATP SYNTHASE SUBUNIT B, CHLOROPLASTIC"/>
    <property type="match status" value="1"/>
</dbReference>
<dbReference type="PANTHER" id="PTHR34264:SF3">
    <property type="entry name" value="ATP SYNTHASE SUBUNIT B, CHLOROPLASTIC"/>
    <property type="match status" value="1"/>
</dbReference>
<dbReference type="Pfam" id="PF00430">
    <property type="entry name" value="ATP-synt_B"/>
    <property type="match status" value="1"/>
</dbReference>
<comment type="function">
    <text evidence="1">F(1)F(0) ATP synthase produces ATP from ADP in the presence of a proton or sodium gradient. F-type ATPases consist of two structural domains, F(1) containing the extramembraneous catalytic core and F(0) containing the membrane proton channel, linked together by a central stalk and a peripheral stalk. During catalysis, ATP synthesis in the catalytic domain of F(1) is coupled via a rotary mechanism of the central stalk subunits to proton translocation.</text>
</comment>
<comment type="function">
    <text evidence="1">Component of the F(0) channel, it forms part of the peripheral stalk, linking F(1) to F(0).</text>
</comment>
<comment type="subunit">
    <text evidence="1">F-type ATPases have 2 components, F(1) - the catalytic core - and F(0) - the membrane proton channel. F(1) has five subunits: alpha(3), beta(3), gamma(1), delta(1), epsilon(1). F(0) has four main subunits: a(1), b(1), b'(1) and c(10-14). The alpha and beta chains form an alternating ring which encloses part of the gamma chain. F(1) is attached to F(0) by a central stalk formed by the gamma and epsilon chains, while a peripheral stalk is formed by the delta, b and b' chains.</text>
</comment>
<comment type="subcellular location">
    <subcellularLocation>
        <location evidence="1">Plastid</location>
        <location evidence="1">Chloroplast thylakoid membrane</location>
        <topology evidence="1">Single-pass membrane protein</topology>
    </subcellularLocation>
</comment>
<comment type="miscellaneous">
    <text>In plastids the F-type ATPase is also known as CF(1)CF(0).</text>
</comment>
<comment type="similarity">
    <text evidence="1">Belongs to the ATPase B chain family.</text>
</comment>
<name>ATPF_OEDCA</name>